<sequence>MAIERQVTEAEEPVSPFARLFSLPGLDVFNIVTIGCKTEGNASTIVEGIKNTLINHPRFSSILVTGHGEHKGKARWIPTKINVEEHVIVPDIDPNIENPDEFLEDYTSNMALSPMDMSKPLWEFHLLKLKTSHAEAVTVARFHHSLGDGMSLMSLLLACTRKTCDPEAFPTFVAPKKNKAKNVCFSLVAWLWFIVRLMFHTCVEVIKSIVFICRASDTSAHIMGKPGATLSANKFIHRIISLDDVKMVKNAMNMTVNDVLFGMVQAGLSRYLNQRYDLETSSKSRKNLHNIGLHGVVFFNLRPNRNIEDLAKMMAKGSKCRWGNSIGYVLIPLGMKPQDDVFEYVRQAKTIMDGKKHSLEPLFSYGLLKVTMEVFGLRGLKTLVKRIFGSTTMIFSNVVGPDEEISFFGHRIAYIAASTFGVPQALNICIQSYVDKLIINIGVDVDVIPDPHHLCDLIIEALRMMNSAAPKKVFHASKV</sequence>
<protein>
    <recommendedName>
        <fullName evidence="7">Wax ester synthase/diacylglycerol acyltransferase 2</fullName>
        <shortName evidence="7">WS/DGAT 2</shortName>
    </recommendedName>
    <alternativeName>
        <fullName evidence="7">Diacylglycerol O-acyltransferase WSD2</fullName>
        <ecNumber evidence="2">2.3.1.20</ecNumber>
    </alternativeName>
    <alternativeName>
        <fullName evidence="7">Long-chain-alcohol O-fatty-acyltransferase WSD2</fullName>
        <ecNumber evidence="2">2.3.1.75</ecNumber>
    </alternativeName>
</protein>
<dbReference type="EC" id="2.3.1.20" evidence="2"/>
<dbReference type="EC" id="2.3.1.75" evidence="2"/>
<dbReference type="EMBL" id="AC069273">
    <property type="protein sequence ID" value="AAG51135.1"/>
    <property type="molecule type" value="Genomic_DNA"/>
</dbReference>
<dbReference type="EMBL" id="CP002684">
    <property type="protein sequence ID" value="AEE35274.1"/>
    <property type="molecule type" value="Genomic_DNA"/>
</dbReference>
<dbReference type="EMBL" id="BT003906">
    <property type="protein sequence ID" value="AAO41954.1"/>
    <property type="molecule type" value="mRNA"/>
</dbReference>
<dbReference type="EMBL" id="BT005032">
    <property type="protein sequence ID" value="AAO50565.1"/>
    <property type="molecule type" value="mRNA"/>
</dbReference>
<dbReference type="PIR" id="D96744">
    <property type="entry name" value="D96744"/>
</dbReference>
<dbReference type="RefSeq" id="NP_177356.1">
    <property type="nucleotide sequence ID" value="NM_105869.4"/>
</dbReference>
<dbReference type="SMR" id="Q9C7H4"/>
<dbReference type="GlyCosmos" id="Q9C7H4">
    <property type="glycosylation" value="1 site, No reported glycans"/>
</dbReference>
<dbReference type="GlyGen" id="Q9C7H4">
    <property type="glycosylation" value="1 site"/>
</dbReference>
<dbReference type="iPTMnet" id="Q9C7H4"/>
<dbReference type="PaxDb" id="3702-AT1G72110.1"/>
<dbReference type="ProteomicsDB" id="177686"/>
<dbReference type="EnsemblPlants" id="AT1G72110.1">
    <property type="protein sequence ID" value="AT1G72110.1"/>
    <property type="gene ID" value="AT1G72110"/>
</dbReference>
<dbReference type="GeneID" id="843542"/>
<dbReference type="Gramene" id="AT1G72110.1">
    <property type="protein sequence ID" value="AT1G72110.1"/>
    <property type="gene ID" value="AT1G72110"/>
</dbReference>
<dbReference type="KEGG" id="ath:AT1G72110"/>
<dbReference type="Araport" id="AT1G72110"/>
<dbReference type="TAIR" id="AT1G72110"/>
<dbReference type="eggNOG" id="ENOG502QTZ2">
    <property type="taxonomic scope" value="Eukaryota"/>
</dbReference>
<dbReference type="HOGENOM" id="CLU_027831_0_0_1"/>
<dbReference type="InParanoid" id="Q9C7H4"/>
<dbReference type="OMA" id="KARHICW"/>
<dbReference type="PhylomeDB" id="Q9C7H4"/>
<dbReference type="UniPathway" id="UPA00282"/>
<dbReference type="PRO" id="PR:Q9C7H4"/>
<dbReference type="Proteomes" id="UP000006548">
    <property type="component" value="Chromosome 1"/>
</dbReference>
<dbReference type="ExpressionAtlas" id="Q9C7H4">
    <property type="expression patterns" value="baseline and differential"/>
</dbReference>
<dbReference type="GO" id="GO:0005789">
    <property type="term" value="C:endoplasmic reticulum membrane"/>
    <property type="evidence" value="ECO:0007669"/>
    <property type="project" value="UniProtKB-SubCell"/>
</dbReference>
<dbReference type="GO" id="GO:0005886">
    <property type="term" value="C:plasma membrane"/>
    <property type="evidence" value="ECO:0007669"/>
    <property type="project" value="UniProtKB-SubCell"/>
</dbReference>
<dbReference type="GO" id="GO:0004144">
    <property type="term" value="F:diacylglycerol O-acyltransferase activity"/>
    <property type="evidence" value="ECO:0007669"/>
    <property type="project" value="UniProtKB-EC"/>
</dbReference>
<dbReference type="GO" id="GO:0047196">
    <property type="term" value="F:long-chain-alcohol O-fatty-acyltransferase activity"/>
    <property type="evidence" value="ECO:0007669"/>
    <property type="project" value="UniProtKB-EC"/>
</dbReference>
<dbReference type="GO" id="GO:0019432">
    <property type="term" value="P:triglyceride biosynthetic process"/>
    <property type="evidence" value="ECO:0007669"/>
    <property type="project" value="UniProtKB-UniPathway"/>
</dbReference>
<dbReference type="InterPro" id="IPR045034">
    <property type="entry name" value="O-acyltransferase_WSD1-like"/>
</dbReference>
<dbReference type="InterPro" id="IPR009721">
    <property type="entry name" value="O-acyltransferase_WSD1_C"/>
</dbReference>
<dbReference type="InterPro" id="IPR004255">
    <property type="entry name" value="O-acyltransferase_WSD1_N"/>
</dbReference>
<dbReference type="PANTHER" id="PTHR31650">
    <property type="entry name" value="O-ACYLTRANSFERASE (WSD1-LIKE) FAMILY PROTEIN"/>
    <property type="match status" value="1"/>
</dbReference>
<dbReference type="PANTHER" id="PTHR31650:SF25">
    <property type="entry name" value="WAX ESTER SYNTHASE_DIACYLGLYCEROL ACYLTRANSFERASE 2"/>
    <property type="match status" value="1"/>
</dbReference>
<dbReference type="Pfam" id="PF06974">
    <property type="entry name" value="WS_DGAT_C"/>
    <property type="match status" value="1"/>
</dbReference>
<dbReference type="Pfam" id="PF03007">
    <property type="entry name" value="WS_DGAT_cat"/>
    <property type="match status" value="1"/>
</dbReference>
<dbReference type="SUPFAM" id="SSF52777">
    <property type="entry name" value="CoA-dependent acyltransferases"/>
    <property type="match status" value="1"/>
</dbReference>
<keyword id="KW-0012">Acyltransferase</keyword>
<keyword id="KW-1003">Cell membrane</keyword>
<keyword id="KW-0256">Endoplasmic reticulum</keyword>
<keyword id="KW-0325">Glycoprotein</keyword>
<keyword id="KW-0472">Membrane</keyword>
<keyword id="KW-1185">Reference proteome</keyword>
<keyword id="KW-0808">Transferase</keyword>
<keyword id="KW-0812">Transmembrane</keyword>
<keyword id="KW-1133">Transmembrane helix</keyword>
<proteinExistence type="evidence at transcript level"/>
<gene>
    <name evidence="7" type="primary">WSD2</name>
    <name evidence="9" type="ordered locus">At1g72110</name>
    <name evidence="10" type="ORF">F28P5.3</name>
</gene>
<feature type="chain" id="PRO_0000452612" description="Wax ester synthase/diacylglycerol acyltransferase 2">
    <location>
        <begin position="1"/>
        <end position="479"/>
    </location>
</feature>
<feature type="topological domain" description="Cytoplasmic" evidence="8">
    <location>
        <begin position="1"/>
        <end position="182"/>
    </location>
</feature>
<feature type="transmembrane region" description="Helical" evidence="3">
    <location>
        <begin position="183"/>
        <end position="199"/>
    </location>
</feature>
<feature type="topological domain" description="Lumenal" evidence="8">
    <location>
        <begin position="200"/>
        <end position="479"/>
    </location>
</feature>
<feature type="active site" description="Proton acceptor" evidence="3">
    <location>
        <position position="144"/>
    </location>
</feature>
<feature type="glycosylation site" description="N-linked (GlcNAc...) asparagine" evidence="4">
    <location>
        <position position="253"/>
    </location>
</feature>
<name>WSD2_ARATH</name>
<reference key="1">
    <citation type="journal article" date="2000" name="Nature">
        <title>Sequence and analysis of chromosome 1 of the plant Arabidopsis thaliana.</title>
        <authorList>
            <person name="Theologis A."/>
            <person name="Ecker J.R."/>
            <person name="Palm C.J."/>
            <person name="Federspiel N.A."/>
            <person name="Kaul S."/>
            <person name="White O."/>
            <person name="Alonso J."/>
            <person name="Altafi H."/>
            <person name="Araujo R."/>
            <person name="Bowman C.L."/>
            <person name="Brooks S.Y."/>
            <person name="Buehler E."/>
            <person name="Chan A."/>
            <person name="Chao Q."/>
            <person name="Chen H."/>
            <person name="Cheuk R.F."/>
            <person name="Chin C.W."/>
            <person name="Chung M.K."/>
            <person name="Conn L."/>
            <person name="Conway A.B."/>
            <person name="Conway A.R."/>
            <person name="Creasy T.H."/>
            <person name="Dewar K."/>
            <person name="Dunn P."/>
            <person name="Etgu P."/>
            <person name="Feldblyum T.V."/>
            <person name="Feng J.-D."/>
            <person name="Fong B."/>
            <person name="Fujii C.Y."/>
            <person name="Gill J.E."/>
            <person name="Goldsmith A.D."/>
            <person name="Haas B."/>
            <person name="Hansen N.F."/>
            <person name="Hughes B."/>
            <person name="Huizar L."/>
            <person name="Hunter J.L."/>
            <person name="Jenkins J."/>
            <person name="Johnson-Hopson C."/>
            <person name="Khan S."/>
            <person name="Khaykin E."/>
            <person name="Kim C.J."/>
            <person name="Koo H.L."/>
            <person name="Kremenetskaia I."/>
            <person name="Kurtz D.B."/>
            <person name="Kwan A."/>
            <person name="Lam B."/>
            <person name="Langin-Hooper S."/>
            <person name="Lee A."/>
            <person name="Lee J.M."/>
            <person name="Lenz C.A."/>
            <person name="Li J.H."/>
            <person name="Li Y.-P."/>
            <person name="Lin X."/>
            <person name="Liu S.X."/>
            <person name="Liu Z.A."/>
            <person name="Luros J.S."/>
            <person name="Maiti R."/>
            <person name="Marziali A."/>
            <person name="Militscher J."/>
            <person name="Miranda M."/>
            <person name="Nguyen M."/>
            <person name="Nierman W.C."/>
            <person name="Osborne B.I."/>
            <person name="Pai G."/>
            <person name="Peterson J."/>
            <person name="Pham P.K."/>
            <person name="Rizzo M."/>
            <person name="Rooney T."/>
            <person name="Rowley D."/>
            <person name="Sakano H."/>
            <person name="Salzberg S.L."/>
            <person name="Schwartz J.R."/>
            <person name="Shinn P."/>
            <person name="Southwick A.M."/>
            <person name="Sun H."/>
            <person name="Tallon L.J."/>
            <person name="Tambunga G."/>
            <person name="Toriumi M.J."/>
            <person name="Town C.D."/>
            <person name="Utterback T."/>
            <person name="Van Aken S."/>
            <person name="Vaysberg M."/>
            <person name="Vysotskaia V.S."/>
            <person name="Walker M."/>
            <person name="Wu D."/>
            <person name="Yu G."/>
            <person name="Fraser C.M."/>
            <person name="Venter J.C."/>
            <person name="Davis R.W."/>
        </authorList>
    </citation>
    <scope>NUCLEOTIDE SEQUENCE [LARGE SCALE GENOMIC DNA]</scope>
    <source>
        <strain>cv. Columbia</strain>
    </source>
</reference>
<reference key="2">
    <citation type="journal article" date="2017" name="Plant J.">
        <title>Araport11: a complete reannotation of the Arabidopsis thaliana reference genome.</title>
        <authorList>
            <person name="Cheng C.Y."/>
            <person name="Krishnakumar V."/>
            <person name="Chan A.P."/>
            <person name="Thibaud-Nissen F."/>
            <person name="Schobel S."/>
            <person name="Town C.D."/>
        </authorList>
    </citation>
    <scope>GENOME REANNOTATION</scope>
    <source>
        <strain>cv. Columbia</strain>
    </source>
</reference>
<reference key="3">
    <citation type="journal article" date="2003" name="Science">
        <title>Empirical analysis of transcriptional activity in the Arabidopsis genome.</title>
        <authorList>
            <person name="Yamada K."/>
            <person name="Lim J."/>
            <person name="Dale J.M."/>
            <person name="Chen H."/>
            <person name="Shinn P."/>
            <person name="Palm C.J."/>
            <person name="Southwick A.M."/>
            <person name="Wu H.C."/>
            <person name="Kim C.J."/>
            <person name="Nguyen M."/>
            <person name="Pham P.K."/>
            <person name="Cheuk R.F."/>
            <person name="Karlin-Newmann G."/>
            <person name="Liu S.X."/>
            <person name="Lam B."/>
            <person name="Sakano H."/>
            <person name="Wu T."/>
            <person name="Yu G."/>
            <person name="Miranda M."/>
            <person name="Quach H.L."/>
            <person name="Tripp M."/>
            <person name="Chang C.H."/>
            <person name="Lee J.M."/>
            <person name="Toriumi M.J."/>
            <person name="Chan M.M."/>
            <person name="Tang C.C."/>
            <person name="Onodera C.S."/>
            <person name="Deng J.M."/>
            <person name="Akiyama K."/>
            <person name="Ansari Y."/>
            <person name="Arakawa T."/>
            <person name="Banh J."/>
            <person name="Banno F."/>
            <person name="Bowser L."/>
            <person name="Brooks S.Y."/>
            <person name="Carninci P."/>
            <person name="Chao Q."/>
            <person name="Choy N."/>
            <person name="Enju A."/>
            <person name="Goldsmith A.D."/>
            <person name="Gurjal M."/>
            <person name="Hansen N.F."/>
            <person name="Hayashizaki Y."/>
            <person name="Johnson-Hopson C."/>
            <person name="Hsuan V.W."/>
            <person name="Iida K."/>
            <person name="Karnes M."/>
            <person name="Khan S."/>
            <person name="Koesema E."/>
            <person name="Ishida J."/>
            <person name="Jiang P.X."/>
            <person name="Jones T."/>
            <person name="Kawai J."/>
            <person name="Kamiya A."/>
            <person name="Meyers C."/>
            <person name="Nakajima M."/>
            <person name="Narusaka M."/>
            <person name="Seki M."/>
            <person name="Sakurai T."/>
            <person name="Satou M."/>
            <person name="Tamse R."/>
            <person name="Vaysberg M."/>
            <person name="Wallender E.K."/>
            <person name="Wong C."/>
            <person name="Yamamura Y."/>
            <person name="Yuan S."/>
            <person name="Shinozaki K."/>
            <person name="Davis R.W."/>
            <person name="Theologis A."/>
            <person name="Ecker J.R."/>
        </authorList>
    </citation>
    <scope>NUCLEOTIDE SEQUENCE [LARGE SCALE MRNA]</scope>
    <source>
        <strain>cv. Columbia</strain>
    </source>
</reference>
<reference key="4">
    <citation type="journal article" date="2003" name="J. Biol. Chem.">
        <title>A novel bifunctional wax ester synthase/acyl-CoA:diacylglycerol acyltransferase mediates wax ester and triacylglycerol biosynthesis in Acinetobacter calcoaceticus ADP1.</title>
        <authorList>
            <person name="Kalscheuer R."/>
            <person name="Steinbuchel A."/>
        </authorList>
    </citation>
    <scope>GENE FAMILY</scope>
</reference>
<reference key="5">
    <citation type="journal article" date="2005" name="Plant Physiol.">
        <title>Cuticular lipid composition, surface structure, and gene expression in Arabidopsis stem epidermis.</title>
        <authorList>
            <person name="Suh M.C."/>
            <person name="Samuels A.L."/>
            <person name="Jetter R."/>
            <person name="Kunst L."/>
            <person name="Pollard M."/>
            <person name="Ohlrogge J."/>
            <person name="Beisson F."/>
        </authorList>
    </citation>
    <scope>INDUCTION</scope>
</reference>
<reference key="6">
    <citation type="journal article" date="2008" name="Plant Physiol.">
        <title>Identification of the wax ester synthase/acyl-coenzyme A: diacylglycerol acyltransferase WSD1 required for stem wax ester biosynthesis in Arabidopsis.</title>
        <authorList>
            <person name="Li F."/>
            <person name="Wu X."/>
            <person name="Lam P."/>
            <person name="Bird D."/>
            <person name="Zheng H."/>
            <person name="Samuels A.L."/>
            <person name="Jetter R."/>
            <person name="Kunst L."/>
        </authorList>
    </citation>
    <scope>GENE FAMILY</scope>
    <scope>NOMENCLATURE</scope>
</reference>
<reference key="7">
    <citation type="journal article" date="2013" name="Arabidopsis Book">
        <title>Acyl-lipid metabolism.</title>
        <authorList>
            <person name="Li-Beisson Y."/>
            <person name="Shorrosh B."/>
            <person name="Beisson F."/>
            <person name="Andersson M.X."/>
            <person name="Arondel V."/>
            <person name="Bates P.D."/>
            <person name="Baud S."/>
            <person name="Bird D."/>
            <person name="Debono A."/>
            <person name="Durrett T.P."/>
            <person name="Franke R.B."/>
            <person name="Graham I.A."/>
            <person name="Katayama K."/>
            <person name="Kelly A.A."/>
            <person name="Larson T."/>
            <person name="Markham J.E."/>
            <person name="Miquel M."/>
            <person name="Molina I."/>
            <person name="Nishida I."/>
            <person name="Rowland O."/>
            <person name="Samuels L."/>
            <person name="Schmid K.M."/>
            <person name="Wada H."/>
            <person name="Welti R."/>
            <person name="Xu C."/>
            <person name="Zallot R."/>
            <person name="Ohlrogge J."/>
        </authorList>
    </citation>
    <scope>REVIEW ON ACYL-LIPID METABOLISM</scope>
</reference>
<reference key="8">
    <citation type="journal article" date="2019" name="Plant J.">
        <title>Surface wax esters contribute to drought tolerance in Arabidopsis.</title>
        <authorList>
            <person name="Patwari P."/>
            <person name="Salewski V."/>
            <person name="Gutbrod K."/>
            <person name="Kreszies T."/>
            <person name="Dresen-Scholz B."/>
            <person name="Peisker H."/>
            <person name="Steiner U."/>
            <person name="Meyer A.J."/>
            <person name="Schreiber L."/>
            <person name="Doermann P."/>
        </authorList>
    </citation>
    <scope>TISSUE SPECIFICITY</scope>
    <source>
        <strain>cv. Columbia</strain>
    </source>
</reference>
<accession>Q9C7H4</accession>
<organism>
    <name type="scientific">Arabidopsis thaliana</name>
    <name type="common">Mouse-ear cress</name>
    <dbReference type="NCBI Taxonomy" id="3702"/>
    <lineage>
        <taxon>Eukaryota</taxon>
        <taxon>Viridiplantae</taxon>
        <taxon>Streptophyta</taxon>
        <taxon>Embryophyta</taxon>
        <taxon>Tracheophyta</taxon>
        <taxon>Spermatophyta</taxon>
        <taxon>Magnoliopsida</taxon>
        <taxon>eudicotyledons</taxon>
        <taxon>Gunneridae</taxon>
        <taxon>Pentapetalae</taxon>
        <taxon>rosids</taxon>
        <taxon>malvids</taxon>
        <taxon>Brassicales</taxon>
        <taxon>Brassicaceae</taxon>
        <taxon>Camelineae</taxon>
        <taxon>Arabidopsis</taxon>
    </lineage>
</organism>
<comment type="function">
    <text evidence="2">Bifunctional wax ester synthase/diacylglycerol acyltransferase (By similarity). Involved in cuticular wax biosynthesis (By similarity).</text>
</comment>
<comment type="catalytic activity">
    <reaction evidence="2">
        <text>an acyl-CoA + a 1,2-diacyl-sn-glycerol = a triacyl-sn-glycerol + CoA</text>
        <dbReference type="Rhea" id="RHEA:10868"/>
        <dbReference type="ChEBI" id="CHEBI:17815"/>
        <dbReference type="ChEBI" id="CHEBI:57287"/>
        <dbReference type="ChEBI" id="CHEBI:58342"/>
        <dbReference type="ChEBI" id="CHEBI:64615"/>
        <dbReference type="EC" id="2.3.1.20"/>
    </reaction>
</comment>
<comment type="catalytic activity">
    <reaction evidence="2">
        <text>a long chain fatty alcohol + a fatty acyl-CoA = a wax ester + CoA</text>
        <dbReference type="Rhea" id="RHEA:38443"/>
        <dbReference type="ChEBI" id="CHEBI:10036"/>
        <dbReference type="ChEBI" id="CHEBI:17135"/>
        <dbReference type="ChEBI" id="CHEBI:57287"/>
        <dbReference type="ChEBI" id="CHEBI:77636"/>
        <dbReference type="EC" id="2.3.1.75"/>
    </reaction>
</comment>
<comment type="pathway">
    <text evidence="2">Glycerolipid metabolism; triacylglycerol biosynthesis.</text>
</comment>
<comment type="pathway">
    <text evidence="2">Lipid metabolism.</text>
</comment>
<comment type="subcellular location">
    <subcellularLocation>
        <location evidence="1">Cell membrane</location>
        <topology evidence="3">Single-pass membrane protein</topology>
    </subcellularLocation>
    <subcellularLocation>
        <location evidence="2">Endoplasmic reticulum membrane</location>
        <topology evidence="3">Single-pass membrane protein</topology>
    </subcellularLocation>
</comment>
<comment type="tissue specificity">
    <text evidence="6">Mostly expressed in flowers and siliques and barely in roots and stems.</text>
</comment>
<comment type="induction">
    <text evidence="5">Up-regulated in the stem epidermis during active wax synthesis.</text>
</comment>
<comment type="similarity">
    <text evidence="8">In the N-terminal section; belongs to the long-chain O-acyltransferase family.</text>
</comment>
<evidence type="ECO:0000250" key="1">
    <source>
        <dbReference type="UniProtKB" id="Q5KS41"/>
    </source>
</evidence>
<evidence type="ECO:0000250" key="2">
    <source>
        <dbReference type="UniProtKB" id="Q93ZR6"/>
    </source>
</evidence>
<evidence type="ECO:0000255" key="3"/>
<evidence type="ECO:0000255" key="4">
    <source>
        <dbReference type="PROSITE-ProRule" id="PRU00498"/>
    </source>
</evidence>
<evidence type="ECO:0000269" key="5">
    <source>
    </source>
</evidence>
<evidence type="ECO:0000269" key="6">
    <source>
    </source>
</evidence>
<evidence type="ECO:0000303" key="7">
    <source>
    </source>
</evidence>
<evidence type="ECO:0000305" key="8"/>
<evidence type="ECO:0000312" key="9">
    <source>
        <dbReference type="Araport" id="AT1G72110"/>
    </source>
</evidence>
<evidence type="ECO:0000312" key="10">
    <source>
        <dbReference type="EMBL" id="AAG51135.1"/>
    </source>
</evidence>